<protein>
    <recommendedName>
        <fullName evidence="1">Adenosine 5'-phosphosulfate reductase</fullName>
        <shortName evidence="1">APS reductase</shortName>
        <ecNumber evidence="1">1.8.4.10</ecNumber>
    </recommendedName>
    <alternativeName>
        <fullName evidence="1">5'-adenylylsulfate reductase</fullName>
    </alternativeName>
    <alternativeName>
        <fullName evidence="1">Thioredoxin-dependent 5'-adenylylsulfate reductase</fullName>
    </alternativeName>
</protein>
<reference key="1">
    <citation type="journal article" date="2005" name="Proc. Natl. Acad. Sci. U.S.A.">
        <title>Whole genome sequence of Staphylococcus saprophyticus reveals the pathogenesis of uncomplicated urinary tract infection.</title>
        <authorList>
            <person name="Kuroda M."/>
            <person name="Yamashita A."/>
            <person name="Hirakawa H."/>
            <person name="Kumano M."/>
            <person name="Morikawa K."/>
            <person name="Higashide M."/>
            <person name="Maruyama A."/>
            <person name="Inose Y."/>
            <person name="Matoba K."/>
            <person name="Toh H."/>
            <person name="Kuhara S."/>
            <person name="Hattori M."/>
            <person name="Ohta T."/>
        </authorList>
    </citation>
    <scope>NUCLEOTIDE SEQUENCE [LARGE SCALE GENOMIC DNA]</scope>
    <source>
        <strain>ATCC 15305 / DSM 20229 / NCIMB 8711 / NCTC 7292 / S-41</strain>
    </source>
</reference>
<dbReference type="EC" id="1.8.4.10" evidence="1"/>
<dbReference type="EMBL" id="AP008934">
    <property type="protein sequence ID" value="BAE19554.1"/>
    <property type="molecule type" value="Genomic_DNA"/>
</dbReference>
<dbReference type="RefSeq" id="WP_002484343.1">
    <property type="nucleotide sequence ID" value="NZ_MTGA01000035.1"/>
</dbReference>
<dbReference type="SMR" id="Q49UL7"/>
<dbReference type="GeneID" id="3617313"/>
<dbReference type="KEGG" id="ssp:SSP2409"/>
<dbReference type="eggNOG" id="COG0175">
    <property type="taxonomic scope" value="Bacteria"/>
</dbReference>
<dbReference type="HOGENOM" id="CLU_044089_2_1_9"/>
<dbReference type="OrthoDB" id="9772604at2"/>
<dbReference type="Proteomes" id="UP000006371">
    <property type="component" value="Chromosome"/>
</dbReference>
<dbReference type="GO" id="GO:0005737">
    <property type="term" value="C:cytoplasm"/>
    <property type="evidence" value="ECO:0007669"/>
    <property type="project" value="UniProtKB-SubCell"/>
</dbReference>
<dbReference type="GO" id="GO:0051539">
    <property type="term" value="F:4 iron, 4 sulfur cluster binding"/>
    <property type="evidence" value="ECO:0007669"/>
    <property type="project" value="UniProtKB-UniRule"/>
</dbReference>
<dbReference type="GO" id="GO:0043866">
    <property type="term" value="F:adenylyl-sulfate reductase (thioredoxin) activity"/>
    <property type="evidence" value="ECO:0007669"/>
    <property type="project" value="UniProtKB-EC"/>
</dbReference>
<dbReference type="GO" id="GO:0046872">
    <property type="term" value="F:metal ion binding"/>
    <property type="evidence" value="ECO:0007669"/>
    <property type="project" value="UniProtKB-KW"/>
</dbReference>
<dbReference type="GO" id="GO:0004604">
    <property type="term" value="F:phosphoadenylyl-sulfate reductase (thioredoxin) activity"/>
    <property type="evidence" value="ECO:0007669"/>
    <property type="project" value="UniProtKB-UniRule"/>
</dbReference>
<dbReference type="GO" id="GO:0070814">
    <property type="term" value="P:hydrogen sulfide biosynthetic process"/>
    <property type="evidence" value="ECO:0007669"/>
    <property type="project" value="UniProtKB-UniRule"/>
</dbReference>
<dbReference type="GO" id="GO:0019379">
    <property type="term" value="P:sulfate assimilation, phosphoadenylyl sulfate reduction by phosphoadenylyl-sulfate reductase (thioredoxin)"/>
    <property type="evidence" value="ECO:0007669"/>
    <property type="project" value="UniProtKB-UniRule"/>
</dbReference>
<dbReference type="CDD" id="cd23945">
    <property type="entry name" value="PAPS_reductase"/>
    <property type="match status" value="1"/>
</dbReference>
<dbReference type="FunFam" id="3.40.50.620:FF:000095">
    <property type="entry name" value="Phosphoadenosine phosphosulfate reductase"/>
    <property type="match status" value="1"/>
</dbReference>
<dbReference type="Gene3D" id="3.40.50.620">
    <property type="entry name" value="HUPs"/>
    <property type="match status" value="1"/>
</dbReference>
<dbReference type="HAMAP" id="MF_00063">
    <property type="entry name" value="CysH"/>
    <property type="match status" value="1"/>
</dbReference>
<dbReference type="InterPro" id="IPR004511">
    <property type="entry name" value="PAPS/APS_Rdtase"/>
</dbReference>
<dbReference type="InterPro" id="IPR002500">
    <property type="entry name" value="PAPS_reduct_dom"/>
</dbReference>
<dbReference type="InterPro" id="IPR014729">
    <property type="entry name" value="Rossmann-like_a/b/a_fold"/>
</dbReference>
<dbReference type="NCBIfam" id="TIGR00434">
    <property type="entry name" value="cysH"/>
    <property type="match status" value="1"/>
</dbReference>
<dbReference type="NCBIfam" id="NF002537">
    <property type="entry name" value="PRK02090.1"/>
    <property type="match status" value="1"/>
</dbReference>
<dbReference type="PANTHER" id="PTHR46509">
    <property type="entry name" value="PHOSPHOADENOSINE PHOSPHOSULFATE REDUCTASE"/>
    <property type="match status" value="1"/>
</dbReference>
<dbReference type="PANTHER" id="PTHR46509:SF1">
    <property type="entry name" value="PHOSPHOADENOSINE PHOSPHOSULFATE REDUCTASE"/>
    <property type="match status" value="1"/>
</dbReference>
<dbReference type="Pfam" id="PF01507">
    <property type="entry name" value="PAPS_reduct"/>
    <property type="match status" value="1"/>
</dbReference>
<dbReference type="PIRSF" id="PIRSF000857">
    <property type="entry name" value="PAPS_reductase"/>
    <property type="match status" value="1"/>
</dbReference>
<dbReference type="SUPFAM" id="SSF52402">
    <property type="entry name" value="Adenine nucleotide alpha hydrolases-like"/>
    <property type="match status" value="1"/>
</dbReference>
<gene>
    <name evidence="1" type="primary">cysH</name>
    <name type="ordered locus">SSP2409</name>
</gene>
<comment type="function">
    <text evidence="1">Catalyzes the formation of sulfite from adenosine 5'-phosphosulfate (APS) using thioredoxin as an electron donor.</text>
</comment>
<comment type="catalytic activity">
    <reaction evidence="1">
        <text>[thioredoxin]-disulfide + sulfite + AMP + 2 H(+) = adenosine 5'-phosphosulfate + [thioredoxin]-dithiol</text>
        <dbReference type="Rhea" id="RHEA:21976"/>
        <dbReference type="Rhea" id="RHEA-COMP:10698"/>
        <dbReference type="Rhea" id="RHEA-COMP:10700"/>
        <dbReference type="ChEBI" id="CHEBI:15378"/>
        <dbReference type="ChEBI" id="CHEBI:17359"/>
        <dbReference type="ChEBI" id="CHEBI:29950"/>
        <dbReference type="ChEBI" id="CHEBI:50058"/>
        <dbReference type="ChEBI" id="CHEBI:58243"/>
        <dbReference type="ChEBI" id="CHEBI:456215"/>
        <dbReference type="EC" id="1.8.4.10"/>
    </reaction>
</comment>
<comment type="cofactor">
    <cofactor evidence="1">
        <name>[4Fe-4S] cluster</name>
        <dbReference type="ChEBI" id="CHEBI:49883"/>
    </cofactor>
    <text evidence="1">Binds 1 [4Fe-4S] cluster per subunit.</text>
</comment>
<comment type="pathway">
    <text evidence="1">Sulfur metabolism; hydrogen sulfide biosynthesis; sulfite from sulfate.</text>
</comment>
<comment type="subcellular location">
    <subcellularLocation>
        <location evidence="1">Cytoplasm</location>
    </subcellularLocation>
</comment>
<comment type="similarity">
    <text evidence="1">Belongs to the PAPS reductase family. CysH subfamily.</text>
</comment>
<evidence type="ECO:0000255" key="1">
    <source>
        <dbReference type="HAMAP-Rule" id="MF_00063"/>
    </source>
</evidence>
<accession>Q49UL7</accession>
<feature type="chain" id="PRO_0000100648" description="Adenosine 5'-phosphosulfate reductase">
    <location>
        <begin position="1"/>
        <end position="242"/>
    </location>
</feature>
<feature type="active site" description="Nucleophile; cysteine thiosulfonate intermediate" evidence="1">
    <location>
        <position position="234"/>
    </location>
</feature>
<feature type="binding site" evidence="1">
    <location>
        <position position="125"/>
    </location>
    <ligand>
        <name>[4Fe-4S] cluster</name>
        <dbReference type="ChEBI" id="CHEBI:49883"/>
    </ligand>
</feature>
<feature type="binding site" evidence="1">
    <location>
        <position position="126"/>
    </location>
    <ligand>
        <name>[4Fe-4S] cluster</name>
        <dbReference type="ChEBI" id="CHEBI:49883"/>
    </ligand>
</feature>
<feature type="binding site" evidence="1">
    <location>
        <position position="208"/>
    </location>
    <ligand>
        <name>[4Fe-4S] cluster</name>
        <dbReference type="ChEBI" id="CHEBI:49883"/>
    </ligand>
</feature>
<feature type="binding site" evidence="1">
    <location>
        <position position="211"/>
    </location>
    <ligand>
        <name>[4Fe-4S] cluster</name>
        <dbReference type="ChEBI" id="CHEBI:49883"/>
    </ligand>
</feature>
<organism>
    <name type="scientific">Staphylococcus saprophyticus subsp. saprophyticus (strain ATCC 15305 / DSM 20229 / NCIMB 8711 / NCTC 7292 / S-41)</name>
    <dbReference type="NCBI Taxonomy" id="342451"/>
    <lineage>
        <taxon>Bacteria</taxon>
        <taxon>Bacillati</taxon>
        <taxon>Bacillota</taxon>
        <taxon>Bacilli</taxon>
        <taxon>Bacillales</taxon>
        <taxon>Staphylococcaceae</taxon>
        <taxon>Staphylococcus</taxon>
    </lineage>
</organism>
<proteinExistence type="inferred from homology"/>
<name>CYSH_STAS1</name>
<sequence length="242" mass="27742">MSETKITYDDFNPHAFETLDITDETKGAREVIRWAYDVYGDSIIYSCSFGAEGMILIDLISSVKKDAEIVFLDTNLHFQETYDLIDRVKARYPELNIKLKQPSLTLEEQADQVAPALWKQDPNQCCYIRKIKPLEEVLSGATAWVSGLRREQSPSRQATNFINKDERFKSVKVCPLIHWTWDDVWDYIKAHDLHYNELHDFNFPSIGCIPCTEAVSGNGDSRAGRWTNSTKTECGLHTTNKP</sequence>
<keyword id="KW-0963">Cytoplasm</keyword>
<keyword id="KW-0408">Iron</keyword>
<keyword id="KW-0411">Iron-sulfur</keyword>
<keyword id="KW-0479">Metal-binding</keyword>
<keyword id="KW-0560">Oxidoreductase</keyword>
<keyword id="KW-1185">Reference proteome</keyword>